<comment type="catalytic activity">
    <reaction evidence="1">
        <text>a quinone + succinate = fumarate + a quinol</text>
        <dbReference type="Rhea" id="RHEA:40523"/>
        <dbReference type="ChEBI" id="CHEBI:24646"/>
        <dbReference type="ChEBI" id="CHEBI:29806"/>
        <dbReference type="ChEBI" id="CHEBI:30031"/>
        <dbReference type="ChEBI" id="CHEBI:132124"/>
        <dbReference type="EC" id="1.3.5.1"/>
    </reaction>
</comment>
<comment type="cofactor">
    <cofactor evidence="1">
        <name>FAD</name>
        <dbReference type="ChEBI" id="CHEBI:57692"/>
    </cofactor>
</comment>
<comment type="pathway">
    <text evidence="1">Carbohydrate metabolism; tricarboxylic acid cycle; fumarate from succinate (bacterial route): step 1/1.</text>
</comment>
<comment type="subunit">
    <text evidence="1">Part of an enzyme complex containing four subunits: a flavoprotein, an iron-sulfur, cytochrome b-556, and a hydrophobic anchor protein.</text>
</comment>
<comment type="subcellular location">
    <subcellularLocation>
        <location evidence="1">Cell inner membrane</location>
        <topology evidence="1">Peripheral membrane protein</topology>
        <orientation evidence="1">Cytoplasmic side</orientation>
    </subcellularLocation>
</comment>
<comment type="similarity">
    <text evidence="2">Belongs to the FAD-dependent oxidoreductase 2 family. FRD/SDH subfamily.</text>
</comment>
<organism>
    <name type="scientific">Rickettsia bellii (strain RML369-C)</name>
    <dbReference type="NCBI Taxonomy" id="336407"/>
    <lineage>
        <taxon>Bacteria</taxon>
        <taxon>Pseudomonadati</taxon>
        <taxon>Pseudomonadota</taxon>
        <taxon>Alphaproteobacteria</taxon>
        <taxon>Rickettsiales</taxon>
        <taxon>Rickettsiaceae</taxon>
        <taxon>Rickettsieae</taxon>
        <taxon>Rickettsia</taxon>
        <taxon>belli group</taxon>
    </lineage>
</organism>
<protein>
    <recommendedName>
        <fullName>Succinate dehydrogenase flavoprotein subunit</fullName>
        <ecNumber evidence="1">1.3.5.1</ecNumber>
    </recommendedName>
</protein>
<dbReference type="EC" id="1.3.5.1" evidence="1"/>
<dbReference type="EMBL" id="CP000087">
    <property type="protein sequence ID" value="ABE05245.1"/>
    <property type="molecule type" value="Genomic_DNA"/>
</dbReference>
<dbReference type="RefSeq" id="WP_011477823.1">
    <property type="nucleotide sequence ID" value="NC_007940.1"/>
</dbReference>
<dbReference type="SMR" id="Q1RHB9"/>
<dbReference type="KEGG" id="rbe:RBE_1164"/>
<dbReference type="eggNOG" id="COG1053">
    <property type="taxonomic scope" value="Bacteria"/>
</dbReference>
<dbReference type="HOGENOM" id="CLU_014312_6_1_5"/>
<dbReference type="OrthoDB" id="9806724at2"/>
<dbReference type="UniPathway" id="UPA00223">
    <property type="reaction ID" value="UER01005"/>
</dbReference>
<dbReference type="Proteomes" id="UP000001951">
    <property type="component" value="Chromosome"/>
</dbReference>
<dbReference type="GO" id="GO:0005886">
    <property type="term" value="C:plasma membrane"/>
    <property type="evidence" value="ECO:0007669"/>
    <property type="project" value="UniProtKB-SubCell"/>
</dbReference>
<dbReference type="GO" id="GO:0009055">
    <property type="term" value="F:electron transfer activity"/>
    <property type="evidence" value="ECO:0007669"/>
    <property type="project" value="TreeGrafter"/>
</dbReference>
<dbReference type="GO" id="GO:0050660">
    <property type="term" value="F:flavin adenine dinucleotide binding"/>
    <property type="evidence" value="ECO:0007669"/>
    <property type="project" value="InterPro"/>
</dbReference>
<dbReference type="GO" id="GO:0008177">
    <property type="term" value="F:succinate dehydrogenase (quinone) activity"/>
    <property type="evidence" value="ECO:0007669"/>
    <property type="project" value="UniProtKB-EC"/>
</dbReference>
<dbReference type="GO" id="GO:0022900">
    <property type="term" value="P:electron transport chain"/>
    <property type="evidence" value="ECO:0007669"/>
    <property type="project" value="InterPro"/>
</dbReference>
<dbReference type="GO" id="GO:0006099">
    <property type="term" value="P:tricarboxylic acid cycle"/>
    <property type="evidence" value="ECO:0007669"/>
    <property type="project" value="UniProtKB-UniPathway"/>
</dbReference>
<dbReference type="FunFam" id="3.90.700.10:FF:000001">
    <property type="entry name" value="Mitochondrial succinate dehydrogenase flavoprotein subunit"/>
    <property type="match status" value="1"/>
</dbReference>
<dbReference type="FunFam" id="4.10.80.40:FF:000002">
    <property type="entry name" value="Succinate dehydrogenase [ubiquinone] flavoprotein subunit, mitochondrial"/>
    <property type="match status" value="1"/>
</dbReference>
<dbReference type="FunFam" id="3.50.50.60:FF:000026">
    <property type="entry name" value="Succinate dehydrogenase flavoprotein subunit"/>
    <property type="match status" value="1"/>
</dbReference>
<dbReference type="FunFam" id="1.20.58.100:FF:000001">
    <property type="entry name" value="Succinate dehydrogenase flavoprotein subunit (SdhA)"/>
    <property type="match status" value="1"/>
</dbReference>
<dbReference type="Gene3D" id="3.50.50.60">
    <property type="entry name" value="FAD/NAD(P)-binding domain"/>
    <property type="match status" value="1"/>
</dbReference>
<dbReference type="Gene3D" id="1.20.58.100">
    <property type="entry name" value="Fumarate reductase/succinate dehydrogenase flavoprotein-like, C-terminal domain"/>
    <property type="match status" value="1"/>
</dbReference>
<dbReference type="Gene3D" id="4.10.80.40">
    <property type="entry name" value="succinate dehydrogenase protein domain"/>
    <property type="match status" value="1"/>
</dbReference>
<dbReference type="Gene3D" id="3.90.700.10">
    <property type="entry name" value="Succinate dehydrogenase/fumarate reductase flavoprotein, catalytic domain"/>
    <property type="match status" value="1"/>
</dbReference>
<dbReference type="InterPro" id="IPR003953">
    <property type="entry name" value="FAD-dep_OxRdtase_2_FAD-bd"/>
</dbReference>
<dbReference type="InterPro" id="IPR036188">
    <property type="entry name" value="FAD/NAD-bd_sf"/>
</dbReference>
<dbReference type="InterPro" id="IPR003952">
    <property type="entry name" value="FRD_SDH_FAD_BS"/>
</dbReference>
<dbReference type="InterPro" id="IPR037099">
    <property type="entry name" value="Fum_R/Succ_DH_flav-like_C_sf"/>
</dbReference>
<dbReference type="InterPro" id="IPR015939">
    <property type="entry name" value="Fum_Rdtase/Succ_DH_flav-like_C"/>
</dbReference>
<dbReference type="InterPro" id="IPR030664">
    <property type="entry name" value="SdhA/FrdA/AprA"/>
</dbReference>
<dbReference type="InterPro" id="IPR027477">
    <property type="entry name" value="Succ_DH/fumarate_Rdtase_cat_sf"/>
</dbReference>
<dbReference type="InterPro" id="IPR011281">
    <property type="entry name" value="Succ_DH_flav_su_fwd"/>
</dbReference>
<dbReference type="InterPro" id="IPR014006">
    <property type="entry name" value="Succ_Dhase_FrdA_Gneg"/>
</dbReference>
<dbReference type="NCBIfam" id="TIGR01816">
    <property type="entry name" value="sdhA_forward"/>
    <property type="match status" value="1"/>
</dbReference>
<dbReference type="NCBIfam" id="TIGR01812">
    <property type="entry name" value="sdhA_frdA_Gneg"/>
    <property type="match status" value="1"/>
</dbReference>
<dbReference type="PANTHER" id="PTHR11632">
    <property type="entry name" value="SUCCINATE DEHYDROGENASE 2 FLAVOPROTEIN SUBUNIT"/>
    <property type="match status" value="1"/>
</dbReference>
<dbReference type="PANTHER" id="PTHR11632:SF51">
    <property type="entry name" value="SUCCINATE DEHYDROGENASE [UBIQUINONE] FLAVOPROTEIN SUBUNIT, MITOCHONDRIAL"/>
    <property type="match status" value="1"/>
</dbReference>
<dbReference type="Pfam" id="PF00890">
    <property type="entry name" value="FAD_binding_2"/>
    <property type="match status" value="1"/>
</dbReference>
<dbReference type="Pfam" id="PF02910">
    <property type="entry name" value="Succ_DH_flav_C"/>
    <property type="match status" value="1"/>
</dbReference>
<dbReference type="PIRSF" id="PIRSF000171">
    <property type="entry name" value="SDHA_APRA_LASPO"/>
    <property type="match status" value="1"/>
</dbReference>
<dbReference type="PRINTS" id="PR00411">
    <property type="entry name" value="PNDRDTASEI"/>
</dbReference>
<dbReference type="SUPFAM" id="SSF51905">
    <property type="entry name" value="FAD/NAD(P)-binding domain"/>
    <property type="match status" value="1"/>
</dbReference>
<dbReference type="SUPFAM" id="SSF46977">
    <property type="entry name" value="Succinate dehydrogenase/fumarate reductase flavoprotein C-terminal domain"/>
    <property type="match status" value="1"/>
</dbReference>
<dbReference type="SUPFAM" id="SSF56425">
    <property type="entry name" value="Succinate dehydrogenase/fumarate reductase flavoprotein, catalytic domain"/>
    <property type="match status" value="1"/>
</dbReference>
<dbReference type="PROSITE" id="PS00504">
    <property type="entry name" value="FRD_SDH_FAD_BINDING"/>
    <property type="match status" value="1"/>
</dbReference>
<sequence>MTKSYNIIHHKFDVIVVGAGGAGLRAAFGMAEEGLNTACISKLFPTRSHTVAAQGGISAALGNMGADDWRWHMYDTVKGSDWLGDQDAIEYMCKNAPDAILELEHYGVPFSRTEEGKIYQRPFGGMTTEYGKGKAAQRTCAAADRTGHAILHTLYQQSLKHKVQFFIEYFAIDLLMENGECRGVVAWNLDDGSLHCFRAHNVVLATGGYGRAYFSATSAHTCTGDGGGMAIRAGLPLQDMEFVQFHPTGIYSAGCLITEGARGEGGYLVNANGERFMERYAPAAKDLASRDVVSRAMTIEIREGRGVGEHKDHVFLHLNHLSPEIVHSRLPGISETAKIFAGVDVTKEPIPVLPTVHYNMGGIPTNYHGQVIIKDGKNHNSVVKGLMSIGEAACVSVHGANRLGSNSLLDLVVFGRSAALKAAELIKPASPHKPVSEEALEKIISRFDKIRHSSGNISVADLRLKMQRTMQSHASVFRTQEVLDEGAEMISEIRSGYKDIKVNDKSLIWNSDLVEALELDNLLDQALVTVYSAAARKESRGAHAREDYPDRNDKEWMQHTLSGVDEAGKVVLDYKPVTLTTLSDEVKAIPPAKRVY</sequence>
<proteinExistence type="inferred from homology"/>
<name>SDHA_RICBR</name>
<evidence type="ECO:0000250" key="1">
    <source>
        <dbReference type="UniProtKB" id="P0AC41"/>
    </source>
</evidence>
<evidence type="ECO:0000305" key="2"/>
<keyword id="KW-0997">Cell inner membrane</keyword>
<keyword id="KW-1003">Cell membrane</keyword>
<keyword id="KW-0249">Electron transport</keyword>
<keyword id="KW-0274">FAD</keyword>
<keyword id="KW-0285">Flavoprotein</keyword>
<keyword id="KW-0472">Membrane</keyword>
<keyword id="KW-0560">Oxidoreductase</keyword>
<keyword id="KW-0813">Transport</keyword>
<keyword id="KW-0816">Tricarboxylic acid cycle</keyword>
<feature type="chain" id="PRO_0000280976" description="Succinate dehydrogenase flavoprotein subunit">
    <location>
        <begin position="1"/>
        <end position="596"/>
    </location>
</feature>
<feature type="active site" description="Proton acceptor" evidence="1">
    <location>
        <position position="290"/>
    </location>
</feature>
<feature type="binding site" evidence="1">
    <location>
        <begin position="18"/>
        <end position="23"/>
    </location>
    <ligand>
        <name>FAD</name>
        <dbReference type="ChEBI" id="CHEBI:57692"/>
    </ligand>
</feature>
<feature type="binding site" evidence="1">
    <location>
        <begin position="41"/>
        <end position="56"/>
    </location>
    <ligand>
        <name>FAD</name>
        <dbReference type="ChEBI" id="CHEBI:57692"/>
    </ligand>
</feature>
<feature type="binding site" evidence="1">
    <location>
        <position position="225"/>
    </location>
    <ligand>
        <name>FAD</name>
        <dbReference type="ChEBI" id="CHEBI:57692"/>
    </ligand>
</feature>
<feature type="binding site" evidence="1">
    <location>
        <position position="246"/>
    </location>
    <ligand>
        <name>substrate</name>
    </ligand>
</feature>
<feature type="binding site" evidence="1">
    <location>
        <position position="258"/>
    </location>
    <ligand>
        <name>substrate</name>
    </ligand>
</feature>
<feature type="binding site" evidence="1">
    <location>
        <position position="357"/>
    </location>
    <ligand>
        <name>substrate</name>
    </ligand>
</feature>
<feature type="binding site" evidence="1">
    <location>
        <position position="391"/>
    </location>
    <ligand>
        <name>FAD</name>
        <dbReference type="ChEBI" id="CHEBI:57692"/>
    </ligand>
</feature>
<feature type="binding site" evidence="1">
    <location>
        <position position="402"/>
    </location>
    <ligand>
        <name>substrate</name>
    </ligand>
</feature>
<feature type="binding site" evidence="1">
    <location>
        <begin position="407"/>
        <end position="408"/>
    </location>
    <ligand>
        <name>FAD</name>
        <dbReference type="ChEBI" id="CHEBI:57692"/>
    </ligand>
</feature>
<feature type="modified residue" description="Tele-8alpha-FAD histidine" evidence="1">
    <location>
        <position position="49"/>
    </location>
</feature>
<gene>
    <name type="primary">sdhA</name>
    <name type="ordered locus">RBE_1164</name>
</gene>
<reference key="1">
    <citation type="journal article" date="2006" name="PLoS Genet.">
        <title>Genome sequence of Rickettsia bellii illuminates the role of amoebae in gene exchanges between intracellular pathogens.</title>
        <authorList>
            <person name="Ogata H."/>
            <person name="La Scola B."/>
            <person name="Audic S."/>
            <person name="Renesto P."/>
            <person name="Blanc G."/>
            <person name="Robert C."/>
            <person name="Fournier P.-E."/>
            <person name="Claverie J.-M."/>
            <person name="Raoult D."/>
        </authorList>
    </citation>
    <scope>NUCLEOTIDE SEQUENCE [LARGE SCALE GENOMIC DNA]</scope>
    <source>
        <strain>RML369-C</strain>
    </source>
</reference>
<accession>Q1RHB9</accession>